<name>HEXB_RAT</name>
<dbReference type="EC" id="3.2.1.52" evidence="3"/>
<dbReference type="EMBL" id="BC079376">
    <property type="protein sequence ID" value="AAH79376.1"/>
    <property type="molecule type" value="mRNA"/>
</dbReference>
<dbReference type="RefSeq" id="NP_001011946.1">
    <property type="nucleotide sequence ID" value="NM_001011946.2"/>
</dbReference>
<dbReference type="SMR" id="Q6AXR4"/>
<dbReference type="FunCoup" id="Q6AXR4">
    <property type="interactions" value="1536"/>
</dbReference>
<dbReference type="STRING" id="10116.ENSRNOP00000044480"/>
<dbReference type="CAZy" id="GH20">
    <property type="family name" value="Glycoside Hydrolase Family 20"/>
</dbReference>
<dbReference type="GlyCosmos" id="Q6AXR4">
    <property type="glycosylation" value="3 sites, No reported glycans"/>
</dbReference>
<dbReference type="GlyGen" id="Q6AXR4">
    <property type="glycosylation" value="3 sites"/>
</dbReference>
<dbReference type="iPTMnet" id="Q6AXR4"/>
<dbReference type="PhosphoSitePlus" id="Q6AXR4"/>
<dbReference type="jPOST" id="Q6AXR4"/>
<dbReference type="PaxDb" id="10116-ENSRNOP00000044480"/>
<dbReference type="PeptideAtlas" id="Q6AXR4"/>
<dbReference type="Ensembl" id="ENSRNOT00000097138.1">
    <property type="protein sequence ID" value="ENSRNOP00000081104.1"/>
    <property type="gene ID" value="ENSRNOG00000025274.7"/>
</dbReference>
<dbReference type="GeneID" id="294673"/>
<dbReference type="KEGG" id="rno:294673"/>
<dbReference type="UCSC" id="RGD:1307607">
    <property type="organism name" value="rat"/>
</dbReference>
<dbReference type="AGR" id="RGD:1307607"/>
<dbReference type="CTD" id="3074"/>
<dbReference type="RGD" id="1307607">
    <property type="gene designation" value="Hexb"/>
</dbReference>
<dbReference type="eggNOG" id="KOG2499">
    <property type="taxonomic scope" value="Eukaryota"/>
</dbReference>
<dbReference type="GeneTree" id="ENSGT00390000008107"/>
<dbReference type="InParanoid" id="Q6AXR4"/>
<dbReference type="OrthoDB" id="428480at2759"/>
<dbReference type="PhylomeDB" id="Q6AXR4"/>
<dbReference type="Reactome" id="R-RNO-2022857">
    <property type="pathway name" value="Keratan sulfate degradation"/>
</dbReference>
<dbReference type="Reactome" id="R-RNO-2024101">
    <property type="pathway name" value="CS/DS degradation"/>
</dbReference>
<dbReference type="Reactome" id="R-RNO-2160916">
    <property type="pathway name" value="Hyaluronan uptake and degradation"/>
</dbReference>
<dbReference type="Reactome" id="R-RNO-6798695">
    <property type="pathway name" value="Neutrophil degranulation"/>
</dbReference>
<dbReference type="Reactome" id="R-RNO-9840310">
    <property type="pathway name" value="Glycosphingolipid catabolism"/>
</dbReference>
<dbReference type="SABIO-RK" id="Q6AXR4"/>
<dbReference type="PRO" id="PR:Q6AXR4"/>
<dbReference type="Proteomes" id="UP000002494">
    <property type="component" value="Chromosome 2"/>
</dbReference>
<dbReference type="GO" id="GO:0001669">
    <property type="term" value="C:acrosomal vesicle"/>
    <property type="evidence" value="ECO:0000266"/>
    <property type="project" value="RGD"/>
</dbReference>
<dbReference type="GO" id="GO:0042582">
    <property type="term" value="C:azurophil granule"/>
    <property type="evidence" value="ECO:0000266"/>
    <property type="project" value="RGD"/>
</dbReference>
<dbReference type="GO" id="GO:1905379">
    <property type="term" value="C:beta-N-acetylhexosaminidase complex"/>
    <property type="evidence" value="ECO:0000266"/>
    <property type="project" value="RGD"/>
</dbReference>
<dbReference type="GO" id="GO:0060473">
    <property type="term" value="C:cortical granule"/>
    <property type="evidence" value="ECO:0000250"/>
    <property type="project" value="UniProtKB"/>
</dbReference>
<dbReference type="GO" id="GO:0005615">
    <property type="term" value="C:extracellular space"/>
    <property type="evidence" value="ECO:0000266"/>
    <property type="project" value="RGD"/>
</dbReference>
<dbReference type="GO" id="GO:0005764">
    <property type="term" value="C:lysosome"/>
    <property type="evidence" value="ECO:0000266"/>
    <property type="project" value="RGD"/>
</dbReference>
<dbReference type="GO" id="GO:0016020">
    <property type="term" value="C:membrane"/>
    <property type="evidence" value="ECO:0000266"/>
    <property type="project" value="RGD"/>
</dbReference>
<dbReference type="GO" id="GO:0008375">
    <property type="term" value="F:acetylglucosaminyltransferase activity"/>
    <property type="evidence" value="ECO:0000266"/>
    <property type="project" value="RGD"/>
</dbReference>
<dbReference type="GO" id="GO:0016231">
    <property type="term" value="F:beta-N-acetylglucosaminidase activity"/>
    <property type="evidence" value="ECO:0000314"/>
    <property type="project" value="RGD"/>
</dbReference>
<dbReference type="GO" id="GO:0004563">
    <property type="term" value="F:beta-N-acetylhexosaminidase activity"/>
    <property type="evidence" value="ECO:0000266"/>
    <property type="project" value="RGD"/>
</dbReference>
<dbReference type="GO" id="GO:0030246">
    <property type="term" value="F:carbohydrate binding"/>
    <property type="evidence" value="ECO:0000314"/>
    <property type="project" value="RGD"/>
</dbReference>
<dbReference type="GO" id="GO:0015929">
    <property type="term" value="F:hexosaminidase activity"/>
    <property type="evidence" value="ECO:0000314"/>
    <property type="project" value="RGD"/>
</dbReference>
<dbReference type="GO" id="GO:0016787">
    <property type="term" value="F:hydrolase activity"/>
    <property type="evidence" value="ECO:0000266"/>
    <property type="project" value="RGD"/>
</dbReference>
<dbReference type="GO" id="GO:0042802">
    <property type="term" value="F:identical protein binding"/>
    <property type="evidence" value="ECO:0000353"/>
    <property type="project" value="RGD"/>
</dbReference>
<dbReference type="GO" id="GO:0044877">
    <property type="term" value="F:protein-containing complex binding"/>
    <property type="evidence" value="ECO:0000314"/>
    <property type="project" value="RGD"/>
</dbReference>
<dbReference type="GO" id="GO:0043615">
    <property type="term" value="P:astrocyte cell migration"/>
    <property type="evidence" value="ECO:0000266"/>
    <property type="project" value="RGD"/>
</dbReference>
<dbReference type="GO" id="GO:0030207">
    <property type="term" value="P:chondroitin sulfate proteoglycan catabolic process"/>
    <property type="evidence" value="ECO:0000266"/>
    <property type="project" value="RGD"/>
</dbReference>
<dbReference type="GO" id="GO:0030209">
    <property type="term" value="P:dermatan sulfate proteoglycan catabolic process"/>
    <property type="evidence" value="ECO:0000266"/>
    <property type="project" value="RGD"/>
</dbReference>
<dbReference type="GO" id="GO:0006689">
    <property type="term" value="P:ganglioside catabolic process"/>
    <property type="evidence" value="ECO:0000250"/>
    <property type="project" value="UniProtKB"/>
</dbReference>
<dbReference type="GO" id="GO:0030203">
    <property type="term" value="P:glycosaminoglycan metabolic process"/>
    <property type="evidence" value="ECO:0000266"/>
    <property type="project" value="RGD"/>
</dbReference>
<dbReference type="GO" id="GO:0006687">
    <property type="term" value="P:glycosphingolipid metabolic process"/>
    <property type="evidence" value="ECO:0000266"/>
    <property type="project" value="RGD"/>
</dbReference>
<dbReference type="GO" id="GO:0030214">
    <property type="term" value="P:hyaluronan catabolic process"/>
    <property type="evidence" value="ECO:0000266"/>
    <property type="project" value="RGD"/>
</dbReference>
<dbReference type="GO" id="GO:0006874">
    <property type="term" value="P:intracellular calcium ion homeostasis"/>
    <property type="evidence" value="ECO:0000266"/>
    <property type="project" value="RGD"/>
</dbReference>
<dbReference type="GO" id="GO:0019915">
    <property type="term" value="P:lipid storage"/>
    <property type="evidence" value="ECO:0000266"/>
    <property type="project" value="RGD"/>
</dbReference>
<dbReference type="GO" id="GO:0007626">
    <property type="term" value="P:locomotory behavior"/>
    <property type="evidence" value="ECO:0000266"/>
    <property type="project" value="RGD"/>
</dbReference>
<dbReference type="GO" id="GO:0007040">
    <property type="term" value="P:lysosome organization"/>
    <property type="evidence" value="ECO:0000266"/>
    <property type="project" value="RGD"/>
</dbReference>
<dbReference type="GO" id="GO:0051651">
    <property type="term" value="P:maintenance of location in cell"/>
    <property type="evidence" value="ECO:0000266"/>
    <property type="project" value="RGD"/>
</dbReference>
<dbReference type="GO" id="GO:0008049">
    <property type="term" value="P:male courtship behavior"/>
    <property type="evidence" value="ECO:0000266"/>
    <property type="project" value="RGD"/>
</dbReference>
<dbReference type="GO" id="GO:0042552">
    <property type="term" value="P:myelination"/>
    <property type="evidence" value="ECO:0000266"/>
    <property type="project" value="RGD"/>
</dbReference>
<dbReference type="GO" id="GO:0006044">
    <property type="term" value="P:N-acetylglucosamine metabolic process"/>
    <property type="evidence" value="ECO:0000314"/>
    <property type="project" value="RGD"/>
</dbReference>
<dbReference type="GO" id="GO:0006491">
    <property type="term" value="P:N-glycan processing"/>
    <property type="evidence" value="ECO:0000318"/>
    <property type="project" value="GO_Central"/>
</dbReference>
<dbReference type="GO" id="GO:0050905">
    <property type="term" value="P:neuromuscular process"/>
    <property type="evidence" value="ECO:0000266"/>
    <property type="project" value="RGD"/>
</dbReference>
<dbReference type="GO" id="GO:0050885">
    <property type="term" value="P:neuromuscular process controlling balance"/>
    <property type="evidence" value="ECO:0000266"/>
    <property type="project" value="RGD"/>
</dbReference>
<dbReference type="GO" id="GO:0070050">
    <property type="term" value="P:neuron cellular homeostasis"/>
    <property type="evidence" value="ECO:0000266"/>
    <property type="project" value="RGD"/>
</dbReference>
<dbReference type="GO" id="GO:0009313">
    <property type="term" value="P:oligosaccharide catabolic process"/>
    <property type="evidence" value="ECO:0000266"/>
    <property type="project" value="RGD"/>
</dbReference>
<dbReference type="GO" id="GO:0048477">
    <property type="term" value="P:oogenesis"/>
    <property type="evidence" value="ECO:0000266"/>
    <property type="project" value="RGD"/>
</dbReference>
<dbReference type="GO" id="GO:0007341">
    <property type="term" value="P:penetration of zona pellucida"/>
    <property type="evidence" value="ECO:0000266"/>
    <property type="project" value="RGD"/>
</dbReference>
<dbReference type="GO" id="GO:0008654">
    <property type="term" value="P:phospholipid biosynthetic process"/>
    <property type="evidence" value="ECO:0000266"/>
    <property type="project" value="RGD"/>
</dbReference>
<dbReference type="GO" id="GO:0045944">
    <property type="term" value="P:positive regulation of transcription by RNA polymerase II"/>
    <property type="evidence" value="ECO:0000266"/>
    <property type="project" value="RGD"/>
</dbReference>
<dbReference type="GO" id="GO:0008360">
    <property type="term" value="P:regulation of cell shape"/>
    <property type="evidence" value="ECO:0000266"/>
    <property type="project" value="RGD"/>
</dbReference>
<dbReference type="GO" id="GO:0019222">
    <property type="term" value="P:regulation of metabolic process"/>
    <property type="evidence" value="ECO:0000266"/>
    <property type="project" value="RGD"/>
</dbReference>
<dbReference type="GO" id="GO:0007605">
    <property type="term" value="P:sensory perception of sound"/>
    <property type="evidence" value="ECO:0000266"/>
    <property type="project" value="RGD"/>
</dbReference>
<dbReference type="GO" id="GO:0019953">
    <property type="term" value="P:sexual reproduction"/>
    <property type="evidence" value="ECO:0000266"/>
    <property type="project" value="RGD"/>
</dbReference>
<dbReference type="GO" id="GO:0007338">
    <property type="term" value="P:single fertilization"/>
    <property type="evidence" value="ECO:0000250"/>
    <property type="project" value="UniProtKB"/>
</dbReference>
<dbReference type="GO" id="GO:0001501">
    <property type="term" value="P:skeletal system development"/>
    <property type="evidence" value="ECO:0000266"/>
    <property type="project" value="RGD"/>
</dbReference>
<dbReference type="CDD" id="cd06562">
    <property type="entry name" value="GH20_HexA_HexB-like"/>
    <property type="match status" value="1"/>
</dbReference>
<dbReference type="FunFam" id="3.20.20.80:FF:000049">
    <property type="entry name" value="Beta-hexosaminidase A"/>
    <property type="match status" value="1"/>
</dbReference>
<dbReference type="FunFam" id="3.30.379.10:FF:000001">
    <property type="entry name" value="Beta-hexosaminidase subunit beta"/>
    <property type="match status" value="1"/>
</dbReference>
<dbReference type="Gene3D" id="3.30.379.10">
    <property type="entry name" value="Chitobiase/beta-hexosaminidase domain 2-like"/>
    <property type="match status" value="1"/>
</dbReference>
<dbReference type="Gene3D" id="3.20.20.80">
    <property type="entry name" value="Glycosidases"/>
    <property type="match status" value="1"/>
</dbReference>
<dbReference type="InterPro" id="IPR025705">
    <property type="entry name" value="Beta_hexosaminidase_sua/sub"/>
</dbReference>
<dbReference type="InterPro" id="IPR015883">
    <property type="entry name" value="Glyco_hydro_20_cat"/>
</dbReference>
<dbReference type="InterPro" id="IPR017853">
    <property type="entry name" value="Glycoside_hydrolase_SF"/>
</dbReference>
<dbReference type="InterPro" id="IPR029018">
    <property type="entry name" value="Hex-like_dom2"/>
</dbReference>
<dbReference type="InterPro" id="IPR029019">
    <property type="entry name" value="HEX_eukaryotic_N"/>
</dbReference>
<dbReference type="PANTHER" id="PTHR22600">
    <property type="entry name" value="BETA-HEXOSAMINIDASE"/>
    <property type="match status" value="1"/>
</dbReference>
<dbReference type="PANTHER" id="PTHR22600:SF38">
    <property type="entry name" value="BETA-HEXOSAMINIDASE SUBUNIT BETA"/>
    <property type="match status" value="1"/>
</dbReference>
<dbReference type="Pfam" id="PF00728">
    <property type="entry name" value="Glyco_hydro_20"/>
    <property type="match status" value="1"/>
</dbReference>
<dbReference type="Pfam" id="PF14845">
    <property type="entry name" value="Glycohydro_20b2"/>
    <property type="match status" value="1"/>
</dbReference>
<dbReference type="PIRSF" id="PIRSF001093">
    <property type="entry name" value="B-hxosamndse_ab_euk"/>
    <property type="match status" value="1"/>
</dbReference>
<dbReference type="PRINTS" id="PR00738">
    <property type="entry name" value="GLHYDRLASE20"/>
</dbReference>
<dbReference type="SUPFAM" id="SSF51445">
    <property type="entry name" value="(Trans)glycosidases"/>
    <property type="match status" value="1"/>
</dbReference>
<dbReference type="SUPFAM" id="SSF55545">
    <property type="entry name" value="beta-N-acetylhexosaminidase-like domain"/>
    <property type="match status" value="1"/>
</dbReference>
<keyword id="KW-0968">Cytoplasmic vesicle</keyword>
<keyword id="KW-1015">Disulfide bond</keyword>
<keyword id="KW-0325">Glycoprotein</keyword>
<keyword id="KW-0326">Glycosidase</keyword>
<keyword id="KW-0378">Hydrolase</keyword>
<keyword id="KW-0443">Lipid metabolism</keyword>
<keyword id="KW-0458">Lysosome</keyword>
<keyword id="KW-1185">Reference proteome</keyword>
<keyword id="KW-0732">Signal</keyword>
<accession>Q6AXR4</accession>
<evidence type="ECO:0000250" key="1"/>
<evidence type="ECO:0000250" key="2">
    <source>
        <dbReference type="UniProtKB" id="P06865"/>
    </source>
</evidence>
<evidence type="ECO:0000250" key="3">
    <source>
        <dbReference type="UniProtKB" id="P07686"/>
    </source>
</evidence>
<evidence type="ECO:0000250" key="4">
    <source>
        <dbReference type="UniProtKB" id="P20060"/>
    </source>
</evidence>
<evidence type="ECO:0000255" key="5"/>
<evidence type="ECO:0000305" key="6"/>
<evidence type="ECO:0000312" key="7">
    <source>
        <dbReference type="RGD" id="1307607"/>
    </source>
</evidence>
<proteinExistence type="evidence at transcript level"/>
<feature type="signal peptide" evidence="5">
    <location>
        <begin position="1"/>
        <end position="23"/>
    </location>
</feature>
<feature type="chain" id="PRO_0000012008" description="Beta-hexosaminidase subunit beta">
    <location>
        <begin position="24"/>
        <end position="537"/>
    </location>
</feature>
<feature type="active site" description="Proton donor" evidence="1">
    <location>
        <position position="333"/>
    </location>
</feature>
<feature type="glycosylation site" description="N-linked (GlcNAc...) asparagine" evidence="5">
    <location>
        <position position="62"/>
    </location>
</feature>
<feature type="glycosylation site" description="N-linked (GlcNAc...) asparagine" evidence="5">
    <location>
        <position position="168"/>
    </location>
</feature>
<feature type="glycosylation site" description="N-linked (GlcNAc...) asparagine" evidence="5">
    <location>
        <position position="305"/>
    </location>
</feature>
<feature type="disulfide bond" evidence="1">
    <location>
        <begin position="69"/>
        <end position="115"/>
    </location>
</feature>
<feature type="disulfide bond" evidence="1">
    <location>
        <begin position="287"/>
        <end position="338"/>
    </location>
</feature>
<feature type="disulfide bond" evidence="1">
    <location>
        <begin position="512"/>
        <end position="529"/>
    </location>
</feature>
<gene>
    <name evidence="7" type="primary">Hexb</name>
</gene>
<reference key="1">
    <citation type="journal article" date="2004" name="Genome Res.">
        <title>The status, quality, and expansion of the NIH full-length cDNA project: the Mammalian Gene Collection (MGC).</title>
        <authorList>
            <consortium name="The MGC Project Team"/>
        </authorList>
    </citation>
    <scope>NUCLEOTIDE SEQUENCE [LARGE SCALE MRNA]</scope>
    <source>
        <tissue>Kidney</tissue>
    </source>
</reference>
<organism>
    <name type="scientific">Rattus norvegicus</name>
    <name type="common">Rat</name>
    <dbReference type="NCBI Taxonomy" id="10116"/>
    <lineage>
        <taxon>Eukaryota</taxon>
        <taxon>Metazoa</taxon>
        <taxon>Chordata</taxon>
        <taxon>Craniata</taxon>
        <taxon>Vertebrata</taxon>
        <taxon>Euteleostomi</taxon>
        <taxon>Mammalia</taxon>
        <taxon>Eutheria</taxon>
        <taxon>Euarchontoglires</taxon>
        <taxon>Glires</taxon>
        <taxon>Rodentia</taxon>
        <taxon>Myomorpha</taxon>
        <taxon>Muroidea</taxon>
        <taxon>Muridae</taxon>
        <taxon>Murinae</taxon>
        <taxon>Rattus</taxon>
    </lineage>
</organism>
<protein>
    <recommendedName>
        <fullName evidence="6">Beta-hexosaminidase subunit beta</fullName>
        <ecNumber evidence="3">3.2.1.52</ecNumber>
    </recommendedName>
    <alternativeName>
        <fullName>Beta-N-acetylhexosaminidase subunit beta</fullName>
        <shortName>Hexosaminidase subunit B</shortName>
    </alternativeName>
    <alternativeName>
        <fullName>N-acetyl-beta-glucosaminidase subunit beta</fullName>
    </alternativeName>
</protein>
<comment type="function">
    <text evidence="3 4">Hydrolyzes the non-reducing end N-acetyl-D-hexosamine and/or sulfated N-acetyl-D-hexosamine of glycoconjugates, such as the oligosaccharide moieties from proteins and neutral glycolipids, or from certain mucopolysaccharides. The isozyme B does not hydrolyze each of these substrates, however hydrolyzes efficiently neutral oligosaccharide. Only the isozyme A is responsible for the degradation of GM2 gangliosides in the presence of GM2A (By similarity). During fertilization is responsible, at least in part, for the zona block to polyspermy. Present in the cortical granules of non-activated oocytes, is exocytosed during the cortical reaction in response to oocyte activation and inactivates the sperm galactosyltransferase-binding site, accounting for the block in sperm binding to the zona pellucida (By similarity).</text>
</comment>
<comment type="catalytic activity">
    <reaction evidence="3">
        <text>Hydrolysis of terminal non-reducing N-acetyl-D-hexosamine residues in N-acetyl-beta-D-hexosaminides.</text>
        <dbReference type="EC" id="3.2.1.52"/>
    </reaction>
</comment>
<comment type="catalytic activity">
    <reaction evidence="3">
        <text>N-acetyl-beta-D-galactosaminyl-(1-&gt;4)-beta-D-3-sulfogalactosyl-(1-&gt;4)-beta-D-glucosyl-(1&lt;-&gt;1')-ceramide + H2O = a beta-D-3-sulfogalactosyl-(1-&gt;4)-beta-D-glucosyl-(1&lt;-&gt;1')-ceramide + N-acetyl-beta-D-galactosamine</text>
        <dbReference type="Rhea" id="RHEA:48276"/>
        <dbReference type="ChEBI" id="CHEBI:15377"/>
        <dbReference type="ChEBI" id="CHEBI:28497"/>
        <dbReference type="ChEBI" id="CHEBI:90163"/>
        <dbReference type="ChEBI" id="CHEBI:90164"/>
    </reaction>
    <physiologicalReaction direction="left-to-right" evidence="3">
        <dbReference type="Rhea" id="RHEA:48277"/>
    </physiologicalReaction>
</comment>
<comment type="catalytic activity">
    <reaction evidence="3">
        <text>a ganglioside GM2 (d18:1(4E)) + H2O = a ganglioside GM3 (d18:1(4E)) + N-acetyl-beta-D-galactosamine</text>
        <dbReference type="Rhea" id="RHEA:47940"/>
        <dbReference type="ChEBI" id="CHEBI:15377"/>
        <dbReference type="ChEBI" id="CHEBI:28497"/>
        <dbReference type="ChEBI" id="CHEBI:60065"/>
        <dbReference type="ChEBI" id="CHEBI:71502"/>
    </reaction>
    <physiologicalReaction direction="left-to-right" evidence="3">
        <dbReference type="Rhea" id="RHEA:47941"/>
    </physiologicalReaction>
</comment>
<comment type="catalytic activity">
    <reaction evidence="3">
        <text>a ganglioside GM2 + H2O = a ganglioside GM3 + N-acetyl-beta-D-galactosamine</text>
        <dbReference type="Rhea" id="RHEA:47968"/>
        <dbReference type="ChEBI" id="CHEBI:15377"/>
        <dbReference type="ChEBI" id="CHEBI:28497"/>
        <dbReference type="ChEBI" id="CHEBI:79210"/>
        <dbReference type="ChEBI" id="CHEBI:79218"/>
    </reaction>
    <physiologicalReaction direction="left-to-right" evidence="3">
        <dbReference type="Rhea" id="RHEA:47969"/>
    </physiologicalReaction>
</comment>
<comment type="catalytic activity">
    <reaction evidence="3">
        <text>beta-D-GalNAc-(1-&gt;4)-alpha-L-IdoA-(1-&gt;3)-beta-D-GalNAc-4-sulfate-(1-&gt;4)-alpha-L-IdoA-(1-&gt;3)-D-GalNAc-4-sulfate + H2O = alpha-L-IdoA-(1-&gt;3)-beta-D-GalNAc-4-sulfate-(1-&gt;4)-alpha-L-IdoA-(1-&gt;3)-D-GalNAc-4-sulfate + N-acetyl-D-galactosamine</text>
        <dbReference type="Rhea" id="RHEA:64372"/>
        <dbReference type="ChEBI" id="CHEBI:15377"/>
        <dbReference type="ChEBI" id="CHEBI:28037"/>
        <dbReference type="ChEBI" id="CHEBI:152565"/>
        <dbReference type="ChEBI" id="CHEBI:152566"/>
    </reaction>
    <physiologicalReaction direction="left-to-right" evidence="3">
        <dbReference type="Rhea" id="RHEA:64373"/>
    </physiologicalReaction>
</comment>
<comment type="catalytic activity">
    <reaction evidence="3">
        <text>N-acetyl-beta-D-6-sulfogalactosaminyl-(1-&gt;4)-alpha-L-iduronyl-(1-&gt;3)-N-acetyl-D-6-sulfogalactosamine + H2O = alpha-L-iduronyl-(1-&gt;3)-N-acetyl-D-6-sulfogalactosamine + N-acetyl-D-6-sulfogalactosamine</text>
        <dbReference type="Rhea" id="RHEA:64384"/>
        <dbReference type="ChEBI" id="CHEBI:15377"/>
        <dbReference type="ChEBI" id="CHEBI:152567"/>
        <dbReference type="ChEBI" id="CHEBI:152568"/>
        <dbReference type="ChEBI" id="CHEBI:153064"/>
    </reaction>
    <physiologicalReaction direction="left-to-right" evidence="3">
        <dbReference type="Rhea" id="RHEA:64385"/>
    </physiologicalReaction>
</comment>
<comment type="activity regulation">
    <text evidence="3">Addition of GM2A stimulates the hydrolysis of sulfated glycosphingolipid SM2 and the ganglioside GM2.</text>
</comment>
<comment type="subunit">
    <text evidence="2 3">There are 3 forms of beta-hexosaminidase: hexosaminidase A is a heterodimer composed of one subunit alpha and one subunit beta (chain A and B); hexosaminidase B is a homodimer of two beta subunits (two chains A and B); hexosaminidase S is a homodimer of two alpha subunits (By similarity). The composition of the dimer (isozyme A versus isozyme S) has a significant effect on the substrate specificity of the alpha subunit active site (By similarity).</text>
</comment>
<comment type="subcellular location">
    <subcellularLocation>
        <location evidence="3">Lysosome</location>
    </subcellularLocation>
    <subcellularLocation>
        <location evidence="4">Cytoplasmic vesicle</location>
        <location evidence="4">Secretory vesicle</location>
        <location evidence="4">Cortical granule</location>
    </subcellularLocation>
</comment>
<comment type="similarity">
    <text evidence="6">Belongs to the glycosyl hydrolase 20 family.</text>
</comment>
<sequence>MPGSPRRAPGLLLQALVAMVSLALVAPFGLQPALWPMPRSVQVFPRLLYISPENFQIDNSPNSTAGPSCSLLLEAFRRYYNYIFGFYKRHHGPAKFQDKPQLEKLLVFINLEPQCDAFPSMSSDESYSLLVQEPVALLKANEVWGALRGLETFSQLVYQDAYGTFTINESTIADSPRFPHRGILIDTSRHYLPVKTIFKTLDAMAFNKFNVLHWHIVDDQSFPYQSITFPELSNKGSYSLSHVYTPNDIHMVLEYARLRGIRVIPEFDSPGHTQSWGKGQKNLLTPCFIQKIRTQKVGPVDPSLNTTYVFFDTFFKEISRVFPDQFIHLGGDEVEFECWASNPNIQNFMKKKGFGNNFRRLESFYIKKILDIITSLKKSSIVWQDVFDDQVELQPGTVVEVWKSENYLNELAQVTASGFPAILSAPWYLDLISYGQDWRNYYKAEPLNFEGSEKQKQLVIGGEACLWGEYVDATNLIPRLWPRASAVGERLWSPRIITNLENAYRRLAVHRCRMVSRGIAAQPLFTGYCNYENKMEK</sequence>